<accession>P0C277</accession>
<feature type="chain" id="PRO_0000268416" description="Bifunctional protein FolD">
    <location>
        <begin position="1"/>
        <end position="284"/>
    </location>
</feature>
<feature type="binding site" evidence="1">
    <location>
        <begin position="166"/>
        <end position="168"/>
    </location>
    <ligand>
        <name>NADP(+)</name>
        <dbReference type="ChEBI" id="CHEBI:58349"/>
    </ligand>
</feature>
<feature type="binding site" evidence="1">
    <location>
        <position position="191"/>
    </location>
    <ligand>
        <name>NADP(+)</name>
        <dbReference type="ChEBI" id="CHEBI:58349"/>
    </ligand>
</feature>
<feature type="binding site" evidence="1">
    <location>
        <position position="232"/>
    </location>
    <ligand>
        <name>NADP(+)</name>
        <dbReference type="ChEBI" id="CHEBI:58349"/>
    </ligand>
</feature>
<proteinExistence type="inferred from homology"/>
<evidence type="ECO:0000255" key="1">
    <source>
        <dbReference type="HAMAP-Rule" id="MF_01576"/>
    </source>
</evidence>
<evidence type="ECO:0000305" key="2"/>
<comment type="function">
    <text evidence="1">Catalyzes the oxidation of 5,10-methylenetetrahydrofolate to 5,10-methenyltetrahydrofolate and then the hydrolysis of 5,10-methenyltetrahydrofolate to 10-formyltetrahydrofolate.</text>
</comment>
<comment type="catalytic activity">
    <reaction evidence="1">
        <text>(6R)-5,10-methylene-5,6,7,8-tetrahydrofolate + NADP(+) = (6R)-5,10-methenyltetrahydrofolate + NADPH</text>
        <dbReference type="Rhea" id="RHEA:22812"/>
        <dbReference type="ChEBI" id="CHEBI:15636"/>
        <dbReference type="ChEBI" id="CHEBI:57455"/>
        <dbReference type="ChEBI" id="CHEBI:57783"/>
        <dbReference type="ChEBI" id="CHEBI:58349"/>
        <dbReference type="EC" id="1.5.1.5"/>
    </reaction>
</comment>
<comment type="catalytic activity">
    <reaction evidence="1">
        <text>(6R)-5,10-methenyltetrahydrofolate + H2O = (6R)-10-formyltetrahydrofolate + H(+)</text>
        <dbReference type="Rhea" id="RHEA:23700"/>
        <dbReference type="ChEBI" id="CHEBI:15377"/>
        <dbReference type="ChEBI" id="CHEBI:15378"/>
        <dbReference type="ChEBI" id="CHEBI:57455"/>
        <dbReference type="ChEBI" id="CHEBI:195366"/>
        <dbReference type="EC" id="3.5.4.9"/>
    </reaction>
</comment>
<comment type="pathway">
    <text evidence="1">One-carbon metabolism; tetrahydrofolate interconversion.</text>
</comment>
<comment type="subunit">
    <text evidence="1">Homodimer.</text>
</comment>
<comment type="similarity">
    <text evidence="1">Belongs to the tetrahydrofolate dehydrogenase/cyclohydrolase family.</text>
</comment>
<comment type="sequence caution" evidence="2">
    <conflict type="frameshift">
        <sequence resource="EMBL" id="AE002098"/>
    </conflict>
</comment>
<dbReference type="EC" id="1.5.1.5" evidence="1"/>
<dbReference type="EC" id="3.5.4.9" evidence="1"/>
<dbReference type="EMBL" id="AE002098">
    <property type="status" value="NOT_ANNOTATED_CDS"/>
    <property type="molecule type" value="Genomic_DNA"/>
</dbReference>
<dbReference type="SMR" id="P0C277"/>
<dbReference type="FunCoup" id="P0C277">
    <property type="interactions" value="475"/>
</dbReference>
<dbReference type="InParanoid" id="P0C277"/>
<dbReference type="UniPathway" id="UPA00193"/>
<dbReference type="Proteomes" id="UP000000425">
    <property type="component" value="Chromosome"/>
</dbReference>
<dbReference type="GO" id="GO:0005829">
    <property type="term" value="C:cytosol"/>
    <property type="evidence" value="ECO:0000318"/>
    <property type="project" value="GO_Central"/>
</dbReference>
<dbReference type="GO" id="GO:0004477">
    <property type="term" value="F:methenyltetrahydrofolate cyclohydrolase activity"/>
    <property type="evidence" value="ECO:0000318"/>
    <property type="project" value="GO_Central"/>
</dbReference>
<dbReference type="GO" id="GO:0004488">
    <property type="term" value="F:methylenetetrahydrofolate dehydrogenase (NADP+) activity"/>
    <property type="evidence" value="ECO:0000318"/>
    <property type="project" value="GO_Central"/>
</dbReference>
<dbReference type="GO" id="GO:0000105">
    <property type="term" value="P:L-histidine biosynthetic process"/>
    <property type="evidence" value="ECO:0007669"/>
    <property type="project" value="UniProtKB-KW"/>
</dbReference>
<dbReference type="GO" id="GO:0009086">
    <property type="term" value="P:methionine biosynthetic process"/>
    <property type="evidence" value="ECO:0007669"/>
    <property type="project" value="UniProtKB-KW"/>
</dbReference>
<dbReference type="GO" id="GO:0006164">
    <property type="term" value="P:purine nucleotide biosynthetic process"/>
    <property type="evidence" value="ECO:0007669"/>
    <property type="project" value="UniProtKB-KW"/>
</dbReference>
<dbReference type="GO" id="GO:0035999">
    <property type="term" value="P:tetrahydrofolate interconversion"/>
    <property type="evidence" value="ECO:0000318"/>
    <property type="project" value="GO_Central"/>
</dbReference>
<dbReference type="CDD" id="cd01080">
    <property type="entry name" value="NAD_bind_m-THF_DH_Cyclohyd"/>
    <property type="match status" value="1"/>
</dbReference>
<dbReference type="FunFam" id="3.40.50.10860:FF:000001">
    <property type="entry name" value="Bifunctional protein FolD"/>
    <property type="match status" value="1"/>
</dbReference>
<dbReference type="FunFam" id="3.40.50.720:FF:000006">
    <property type="entry name" value="Bifunctional protein FolD"/>
    <property type="match status" value="1"/>
</dbReference>
<dbReference type="Gene3D" id="3.40.50.10860">
    <property type="entry name" value="Leucine Dehydrogenase, chain A, domain 1"/>
    <property type="match status" value="1"/>
</dbReference>
<dbReference type="Gene3D" id="3.40.50.720">
    <property type="entry name" value="NAD(P)-binding Rossmann-like Domain"/>
    <property type="match status" value="1"/>
</dbReference>
<dbReference type="HAMAP" id="MF_01576">
    <property type="entry name" value="THF_DHG_CYH"/>
    <property type="match status" value="1"/>
</dbReference>
<dbReference type="InterPro" id="IPR046346">
    <property type="entry name" value="Aminoacid_DH-like_N_sf"/>
</dbReference>
<dbReference type="InterPro" id="IPR036291">
    <property type="entry name" value="NAD(P)-bd_dom_sf"/>
</dbReference>
<dbReference type="InterPro" id="IPR000672">
    <property type="entry name" value="THF_DH/CycHdrlase"/>
</dbReference>
<dbReference type="InterPro" id="IPR020630">
    <property type="entry name" value="THF_DH/CycHdrlase_cat_dom"/>
</dbReference>
<dbReference type="InterPro" id="IPR020867">
    <property type="entry name" value="THF_DH/CycHdrlase_CS"/>
</dbReference>
<dbReference type="InterPro" id="IPR020631">
    <property type="entry name" value="THF_DH/CycHdrlase_NAD-bd_dom"/>
</dbReference>
<dbReference type="NCBIfam" id="NF008058">
    <property type="entry name" value="PRK10792.1"/>
    <property type="match status" value="1"/>
</dbReference>
<dbReference type="NCBIfam" id="NF010783">
    <property type="entry name" value="PRK14186.1"/>
    <property type="match status" value="1"/>
</dbReference>
<dbReference type="PANTHER" id="PTHR48099:SF5">
    <property type="entry name" value="C-1-TETRAHYDROFOLATE SYNTHASE, CYTOPLASMIC"/>
    <property type="match status" value="1"/>
</dbReference>
<dbReference type="PANTHER" id="PTHR48099">
    <property type="entry name" value="C-1-TETRAHYDROFOLATE SYNTHASE, CYTOPLASMIC-RELATED"/>
    <property type="match status" value="1"/>
</dbReference>
<dbReference type="Pfam" id="PF00763">
    <property type="entry name" value="THF_DHG_CYH"/>
    <property type="match status" value="1"/>
</dbReference>
<dbReference type="Pfam" id="PF02882">
    <property type="entry name" value="THF_DHG_CYH_C"/>
    <property type="match status" value="1"/>
</dbReference>
<dbReference type="PRINTS" id="PR00085">
    <property type="entry name" value="THFDHDRGNASE"/>
</dbReference>
<dbReference type="SUPFAM" id="SSF53223">
    <property type="entry name" value="Aminoacid dehydrogenase-like, N-terminal domain"/>
    <property type="match status" value="1"/>
</dbReference>
<dbReference type="SUPFAM" id="SSF51735">
    <property type="entry name" value="NAD(P)-binding Rossmann-fold domains"/>
    <property type="match status" value="1"/>
</dbReference>
<dbReference type="PROSITE" id="PS00766">
    <property type="entry name" value="THF_DHG_CYH_1"/>
    <property type="match status" value="1"/>
</dbReference>
<dbReference type="PROSITE" id="PS00767">
    <property type="entry name" value="THF_DHG_CYH_2"/>
    <property type="match status" value="1"/>
</dbReference>
<gene>
    <name evidence="1" type="primary">folD</name>
    <name type="ordered locus">NMB2077</name>
</gene>
<name>FOLD_NEIMB</name>
<reference key="1">
    <citation type="journal article" date="2000" name="Science">
        <title>Complete genome sequence of Neisseria meningitidis serogroup B strain MC58.</title>
        <authorList>
            <person name="Tettelin H."/>
            <person name="Saunders N.J."/>
            <person name="Heidelberg J.F."/>
            <person name="Jeffries A.C."/>
            <person name="Nelson K.E."/>
            <person name="Eisen J.A."/>
            <person name="Ketchum K.A."/>
            <person name="Hood D.W."/>
            <person name="Peden J.F."/>
            <person name="Dodson R.J."/>
            <person name="Nelson W.C."/>
            <person name="Gwinn M.L."/>
            <person name="DeBoy R.T."/>
            <person name="Peterson J.D."/>
            <person name="Hickey E.K."/>
            <person name="Haft D.H."/>
            <person name="Salzberg S.L."/>
            <person name="White O."/>
            <person name="Fleischmann R.D."/>
            <person name="Dougherty B.A."/>
            <person name="Mason T.M."/>
            <person name="Ciecko A."/>
            <person name="Parksey D.S."/>
            <person name="Blair E."/>
            <person name="Cittone H."/>
            <person name="Clark E.B."/>
            <person name="Cotton M.D."/>
            <person name="Utterback T.R."/>
            <person name="Khouri H.M."/>
            <person name="Qin H."/>
            <person name="Vamathevan J.J."/>
            <person name="Gill J."/>
            <person name="Scarlato V."/>
            <person name="Masignani V."/>
            <person name="Pizza M."/>
            <person name="Grandi G."/>
            <person name="Sun L."/>
            <person name="Smith H.O."/>
            <person name="Fraser C.M."/>
            <person name="Moxon E.R."/>
            <person name="Rappuoli R."/>
            <person name="Venter J.C."/>
        </authorList>
    </citation>
    <scope>NUCLEOTIDE SEQUENCE [LARGE SCALE GENOMIC DNA]</scope>
    <source>
        <strain>ATCC BAA-335 / MC58</strain>
    </source>
</reference>
<sequence>MSAQLINGKEVSQKRLQAVAEAVAQRQQNNLHHPCLAVVLVGGDPASAVYVRNKKTACQKCGIKSLSYELPESTSQEELLALVDRLNADSEVDGILVQLPLPKHLDSQAVLERISPDKDVDGFHPYNVGRLAVKMPLMRPCTPKGVMTLLEAYGIDPKGKKAVVVGASNIVGRPQALELLLARATVTVCHSATENLTDEVAGADILVVGVGIPNFVKGEWIKPGAVVIDVGINRLDDGSLCGDVEFETAKERAAMITPVPGGVGPMTIATLMENTLHAASLHDA</sequence>
<keyword id="KW-0028">Amino-acid biosynthesis</keyword>
<keyword id="KW-0368">Histidine biosynthesis</keyword>
<keyword id="KW-0378">Hydrolase</keyword>
<keyword id="KW-0486">Methionine biosynthesis</keyword>
<keyword id="KW-0511">Multifunctional enzyme</keyword>
<keyword id="KW-0521">NADP</keyword>
<keyword id="KW-0554">One-carbon metabolism</keyword>
<keyword id="KW-0560">Oxidoreductase</keyword>
<keyword id="KW-0658">Purine biosynthesis</keyword>
<keyword id="KW-1185">Reference proteome</keyword>
<protein>
    <recommendedName>
        <fullName evidence="1">Bifunctional protein FolD</fullName>
    </recommendedName>
    <domain>
        <recommendedName>
            <fullName evidence="1">Methylenetetrahydrofolate dehydrogenase</fullName>
            <ecNumber evidence="1">1.5.1.5</ecNumber>
        </recommendedName>
    </domain>
    <domain>
        <recommendedName>
            <fullName evidence="1">Methenyltetrahydrofolate cyclohydrolase</fullName>
            <ecNumber evidence="1">3.5.4.9</ecNumber>
        </recommendedName>
    </domain>
</protein>
<organism>
    <name type="scientific">Neisseria meningitidis serogroup B (strain ATCC BAA-335 / MC58)</name>
    <dbReference type="NCBI Taxonomy" id="122586"/>
    <lineage>
        <taxon>Bacteria</taxon>
        <taxon>Pseudomonadati</taxon>
        <taxon>Pseudomonadota</taxon>
        <taxon>Betaproteobacteria</taxon>
        <taxon>Neisseriales</taxon>
        <taxon>Neisseriaceae</taxon>
        <taxon>Neisseria</taxon>
    </lineage>
</organism>